<organism>
    <name type="scientific">Paracoccidioides brasiliensis</name>
    <dbReference type="NCBI Taxonomy" id="121759"/>
    <lineage>
        <taxon>Eukaryota</taxon>
        <taxon>Fungi</taxon>
        <taxon>Dikarya</taxon>
        <taxon>Ascomycota</taxon>
        <taxon>Pezizomycotina</taxon>
        <taxon>Eurotiomycetes</taxon>
        <taxon>Eurotiomycetidae</taxon>
        <taxon>Onygenales</taxon>
        <taxon>Ajellomycetaceae</taxon>
        <taxon>Paracoccidioides</taxon>
    </lineage>
</organism>
<comment type="function">
    <text evidence="3">Polymerizes chitin, a structural polymer of the cell wall and septum, by transferring the sugar moiety of UDP-GlcNAc to the non-reducing end of the growing chitin polymer.</text>
</comment>
<comment type="catalytic activity">
    <reaction>
        <text>[(1-&gt;4)-N-acetyl-beta-D-glucosaminyl](n) + UDP-N-acetyl-alpha-D-glucosamine = [(1-&gt;4)-N-acetyl-beta-D-glucosaminyl](n+1) + UDP + H(+)</text>
        <dbReference type="Rhea" id="RHEA:16637"/>
        <dbReference type="Rhea" id="RHEA-COMP:9593"/>
        <dbReference type="Rhea" id="RHEA-COMP:9595"/>
        <dbReference type="ChEBI" id="CHEBI:15378"/>
        <dbReference type="ChEBI" id="CHEBI:17029"/>
        <dbReference type="ChEBI" id="CHEBI:57705"/>
        <dbReference type="ChEBI" id="CHEBI:58223"/>
        <dbReference type="EC" id="2.4.1.16"/>
    </reaction>
</comment>
<comment type="subcellular location">
    <subcellularLocation>
        <location evidence="3">Cell membrane</location>
        <topology evidence="1">Multi-pass membrane protein</topology>
    </subcellularLocation>
</comment>
<comment type="similarity">
    <text evidence="3">Belongs to the chitin synthase family. Class II subfamily.</text>
</comment>
<protein>
    <recommendedName>
        <fullName>Chitin synthase 2</fullName>
        <ecNumber>2.4.1.16</ecNumber>
    </recommendedName>
    <alternativeName>
        <fullName>Chitin-UDP acetyl-glucosaminyl transferase 2</fullName>
    </alternativeName>
    <alternativeName>
        <fullName>Class-II chitin synthase 2</fullName>
    </alternativeName>
</protein>
<reference key="1">
    <citation type="journal article" date="1998" name="Yeast">
        <title>Molecular cloning and sequencing of a chitin synthase gene (CHS2) of Paracoccidioides brasiliensis.</title>
        <authorList>
            <person name="Nino-Vega G.A."/>
            <person name="Buurman E.T."/>
            <person name="Gooday G.W."/>
            <person name="San-Blas G."/>
            <person name="Gow N.A.R."/>
        </authorList>
    </citation>
    <scope>NUCLEOTIDE SEQUENCE [GENOMIC DNA]</scope>
    <source>
        <strain>ATCC 32071 / IVIC Pb73 / C81</strain>
    </source>
</reference>
<accession>Q92444</accession>
<gene>
    <name type="primary">CHS2</name>
</gene>
<feature type="chain" id="PRO_0000193705" description="Chitin synthase 2">
    <location>
        <begin position="1"/>
        <end position="1043"/>
    </location>
</feature>
<feature type="transmembrane region" description="Helical" evidence="1">
    <location>
        <begin position="663"/>
        <end position="683"/>
    </location>
</feature>
<feature type="transmembrane region" description="Helical" evidence="1">
    <location>
        <begin position="703"/>
        <end position="723"/>
    </location>
</feature>
<feature type="transmembrane region" description="Helical" evidence="1">
    <location>
        <begin position="738"/>
        <end position="758"/>
    </location>
</feature>
<feature type="transmembrane region" description="Helical" evidence="1">
    <location>
        <begin position="780"/>
        <end position="800"/>
    </location>
</feature>
<feature type="transmembrane region" description="Helical" evidence="1">
    <location>
        <begin position="907"/>
        <end position="927"/>
    </location>
</feature>
<feature type="transmembrane region" description="Helical" evidence="1">
    <location>
        <begin position="931"/>
        <end position="951"/>
    </location>
</feature>
<feature type="region of interest" description="Disordered" evidence="2">
    <location>
        <begin position="1"/>
        <end position="133"/>
    </location>
</feature>
<feature type="region of interest" description="Disordered" evidence="2">
    <location>
        <begin position="215"/>
        <end position="234"/>
    </location>
</feature>
<feature type="compositionally biased region" description="Polar residues" evidence="2">
    <location>
        <begin position="1"/>
        <end position="10"/>
    </location>
</feature>
<feature type="compositionally biased region" description="Basic and acidic residues" evidence="2">
    <location>
        <begin position="11"/>
        <end position="21"/>
    </location>
</feature>
<feature type="compositionally biased region" description="Low complexity" evidence="2">
    <location>
        <begin position="43"/>
        <end position="58"/>
    </location>
</feature>
<feature type="compositionally biased region" description="Polar residues" evidence="2">
    <location>
        <begin position="59"/>
        <end position="73"/>
    </location>
</feature>
<feature type="compositionally biased region" description="Polar residues" evidence="2">
    <location>
        <begin position="81"/>
        <end position="93"/>
    </location>
</feature>
<sequence length="1043" mass="116587">MAQESSNMDQSKSDNVTDNKPNRSLISMARPSPQRCHPLDQQSASTSSLPTSRPSSSPGQSPNITPSILTSDTLHLPARSVSPTRPWTPSRGSEWSRHMPLSVSSVNYEPPEINCSPRPGTPSSKYGGSPRRPLRQPVVCWPPASSAGETSIDIADGGDDSEDPFVVGERTVHQRSNTRSSIKLIQFTMQLSPQLLQMKRTPWVKLTLDDGEDDESDFNVHYGPAPTGRQERRGVRKAQMTKKEVRLMNGELVLECKIPRMLHSFLPRRDDREFTHMRYTAVTCDPDDFTVKGFKLRQNIGSTMRETELFVCVTMYNENEIDFTRTMHGIMRNISHFCSRTKSRTWGKDGWQKIVVCIIADGRQKVHPRTLNALAAMGVYQDGIAKNVVNQKPVNAHVYEYTTQVSLDPDLKFKGAEKGIMPCQVIFCMKERNEKKLNSHRWFFNAFGRALNPNICILLDVGTKPEPTALYHLWKAFDQDSNVAGAAGEIKAGKGKGCLGLFNPLVASQNFEYKMSNILDKPLESVFGYITVLPGALSAYRYHALQNDSTGHGPLSMYFKGEMLHGKNADVFTANMYLAEDRILCWELVAKREEQWVLKFVKSAVGETDVPDTVPEFISQRRRWLNGAFFAAVYSLIHFRQIWRTDHTITRKILLHIEFLYQFVSLAFTFFSLANFYLTFYFIAGALSDPTVDPFGHNIGKYIFAILRYTCVLLICLQFVLSMGNRPQGAKKMFLSGMIIYCIIMMYTVFSALYMVVMQLKTSKEMIKDSLSLGNNTFTYIIVSTLSTVGLYFFMSFLYLDPWHMFTSSIQYFALLPSYICRLQIYAFCNTHDVTWGTKGDNVIRTDLGTARITSSSTVELEMPSEQLDIDSGYDESSAISATDSKCPRQSHPRRRCRKTTTAVRTYMVSVWFIANAILAMAVSEAFTEKSVGNNAYLAFVLWSVASLAVFRAVGSTAFAILNVVHRVMEGKMKFAAAGGTGYGYGSYVGSSSGGGGGSSGVRSSGAGSSLGLSSGMGEKVSDWASETGWAVKRTAGKLRFWR</sequence>
<proteinExistence type="inferred from homology"/>
<keyword id="KW-1003">Cell membrane</keyword>
<keyword id="KW-0961">Cell wall biogenesis/degradation</keyword>
<keyword id="KW-0328">Glycosyltransferase</keyword>
<keyword id="KW-0472">Membrane</keyword>
<keyword id="KW-0808">Transferase</keyword>
<keyword id="KW-0812">Transmembrane</keyword>
<keyword id="KW-1133">Transmembrane helix</keyword>
<dbReference type="EC" id="2.4.1.16"/>
<dbReference type="EMBL" id="Y09231">
    <property type="protein sequence ID" value="CAA70433.1"/>
    <property type="molecule type" value="Genomic_DNA"/>
</dbReference>
<dbReference type="SMR" id="Q92444"/>
<dbReference type="CAZy" id="GT2">
    <property type="family name" value="Glycosyltransferase Family 2"/>
</dbReference>
<dbReference type="VEuPathDB" id="FungiDB:PABG_07704"/>
<dbReference type="VEuPathDB" id="FungiDB:PADG_08636"/>
<dbReference type="GO" id="GO:0030428">
    <property type="term" value="C:cell septum"/>
    <property type="evidence" value="ECO:0007669"/>
    <property type="project" value="TreeGrafter"/>
</dbReference>
<dbReference type="GO" id="GO:0005886">
    <property type="term" value="C:plasma membrane"/>
    <property type="evidence" value="ECO:0007669"/>
    <property type="project" value="UniProtKB-SubCell"/>
</dbReference>
<dbReference type="GO" id="GO:0004100">
    <property type="term" value="F:chitin synthase activity"/>
    <property type="evidence" value="ECO:0007669"/>
    <property type="project" value="UniProtKB-EC"/>
</dbReference>
<dbReference type="GO" id="GO:0071555">
    <property type="term" value="P:cell wall organization"/>
    <property type="evidence" value="ECO:0007669"/>
    <property type="project" value="UniProtKB-KW"/>
</dbReference>
<dbReference type="GO" id="GO:0006031">
    <property type="term" value="P:chitin biosynthetic process"/>
    <property type="evidence" value="ECO:0007669"/>
    <property type="project" value="InterPro"/>
</dbReference>
<dbReference type="CDD" id="cd04190">
    <property type="entry name" value="Chitin_synth_C"/>
    <property type="match status" value="1"/>
</dbReference>
<dbReference type="InterPro" id="IPR004835">
    <property type="entry name" value="Chitin_synth"/>
</dbReference>
<dbReference type="InterPro" id="IPR004834">
    <property type="entry name" value="Chitin_synth_fun"/>
</dbReference>
<dbReference type="InterPro" id="IPR013616">
    <property type="entry name" value="Chitin_synth_N"/>
</dbReference>
<dbReference type="InterPro" id="IPR001173">
    <property type="entry name" value="Glyco_trans_2-like"/>
</dbReference>
<dbReference type="InterPro" id="IPR029044">
    <property type="entry name" value="Nucleotide-diphossugar_trans"/>
</dbReference>
<dbReference type="PANTHER" id="PTHR22914">
    <property type="entry name" value="CHITIN SYNTHASE"/>
    <property type="match status" value="1"/>
</dbReference>
<dbReference type="PANTHER" id="PTHR22914:SF38">
    <property type="entry name" value="CHITIN SYNTHASE 2"/>
    <property type="match status" value="1"/>
</dbReference>
<dbReference type="Pfam" id="PF01644">
    <property type="entry name" value="Chitin_synth_1"/>
    <property type="match status" value="1"/>
</dbReference>
<dbReference type="Pfam" id="PF08407">
    <property type="entry name" value="Chitin_synth_1N"/>
    <property type="match status" value="1"/>
</dbReference>
<dbReference type="Pfam" id="PF13632">
    <property type="entry name" value="Glyco_trans_2_3"/>
    <property type="match status" value="1"/>
</dbReference>
<dbReference type="SUPFAM" id="SSF53448">
    <property type="entry name" value="Nucleotide-diphospho-sugar transferases"/>
    <property type="match status" value="1"/>
</dbReference>
<name>CHS2_PARBR</name>
<evidence type="ECO:0000255" key="1"/>
<evidence type="ECO:0000256" key="2">
    <source>
        <dbReference type="SAM" id="MobiDB-lite"/>
    </source>
</evidence>
<evidence type="ECO:0000305" key="3"/>